<feature type="chain" id="PRO_0000400362" description="ATP-dependent zinc metalloprotease FtsH">
    <location>
        <begin position="1"/>
        <end position="664"/>
    </location>
</feature>
<feature type="topological domain" description="Cytoplasmic" evidence="1">
    <location>
        <begin position="1"/>
        <end position="9"/>
    </location>
</feature>
<feature type="transmembrane region" description="Helical" evidence="1">
    <location>
        <begin position="10"/>
        <end position="30"/>
    </location>
</feature>
<feature type="topological domain" description="Extracellular" evidence="1">
    <location>
        <begin position="31"/>
        <end position="136"/>
    </location>
</feature>
<feature type="transmembrane region" description="Helical" evidence="1">
    <location>
        <begin position="137"/>
        <end position="157"/>
    </location>
</feature>
<feature type="topological domain" description="Cytoplasmic" evidence="1">
    <location>
        <begin position="158"/>
        <end position="664"/>
    </location>
</feature>
<feature type="region of interest" description="Disordered" evidence="2">
    <location>
        <begin position="639"/>
        <end position="664"/>
    </location>
</feature>
<feature type="compositionally biased region" description="Basic and acidic residues" evidence="2">
    <location>
        <begin position="639"/>
        <end position="649"/>
    </location>
</feature>
<feature type="active site" evidence="1">
    <location>
        <position position="452"/>
    </location>
</feature>
<feature type="binding site" evidence="1">
    <location>
        <begin position="229"/>
        <end position="236"/>
    </location>
    <ligand>
        <name>ATP</name>
        <dbReference type="ChEBI" id="CHEBI:30616"/>
    </ligand>
</feature>
<feature type="binding site" evidence="1">
    <location>
        <position position="451"/>
    </location>
    <ligand>
        <name>Zn(2+)</name>
        <dbReference type="ChEBI" id="CHEBI:29105"/>
        <note>catalytic</note>
    </ligand>
</feature>
<feature type="binding site" evidence="1">
    <location>
        <position position="455"/>
    </location>
    <ligand>
        <name>Zn(2+)</name>
        <dbReference type="ChEBI" id="CHEBI:29105"/>
        <note>catalytic</note>
    </ligand>
</feature>
<feature type="binding site" evidence="1">
    <location>
        <position position="529"/>
    </location>
    <ligand>
        <name>Zn(2+)</name>
        <dbReference type="ChEBI" id="CHEBI:29105"/>
        <note>catalytic</note>
    </ligand>
</feature>
<evidence type="ECO:0000255" key="1">
    <source>
        <dbReference type="HAMAP-Rule" id="MF_01458"/>
    </source>
</evidence>
<evidence type="ECO:0000256" key="2">
    <source>
        <dbReference type="SAM" id="MobiDB-lite"/>
    </source>
</evidence>
<gene>
    <name evidence="1" type="primary">ftsH</name>
    <name type="ordered locus">MS53_0614</name>
</gene>
<name>FTSH_MYCS5</name>
<proteinExistence type="inferred from homology"/>
<comment type="function">
    <text evidence="1">Acts as a processive, ATP-dependent zinc metallopeptidase for both cytoplasmic and membrane proteins. Plays a role in the quality control of integral membrane proteins.</text>
</comment>
<comment type="cofactor">
    <cofactor evidence="1">
        <name>Zn(2+)</name>
        <dbReference type="ChEBI" id="CHEBI:29105"/>
    </cofactor>
    <text evidence="1">Binds 1 zinc ion per subunit.</text>
</comment>
<comment type="subunit">
    <text evidence="1">Homohexamer.</text>
</comment>
<comment type="subcellular location">
    <subcellularLocation>
        <location evidence="1">Cell membrane</location>
        <topology evidence="1">Multi-pass membrane protein</topology>
        <orientation evidence="1">Cytoplasmic side</orientation>
    </subcellularLocation>
</comment>
<comment type="similarity">
    <text evidence="1">In the central section; belongs to the AAA ATPase family.</text>
</comment>
<comment type="similarity">
    <text evidence="1">In the C-terminal section; belongs to the peptidase M41 family.</text>
</comment>
<dbReference type="EC" id="3.4.24.-" evidence="1"/>
<dbReference type="EMBL" id="AE017245">
    <property type="protein sequence ID" value="AAZ44021.2"/>
    <property type="molecule type" value="Genomic_DNA"/>
</dbReference>
<dbReference type="RefSeq" id="WP_041352118.1">
    <property type="nucleotide sequence ID" value="NC_007294.1"/>
</dbReference>
<dbReference type="SMR" id="Q4A5F0"/>
<dbReference type="STRING" id="262723.MS53_0614"/>
<dbReference type="KEGG" id="msy:MS53_0614"/>
<dbReference type="eggNOG" id="COG0465">
    <property type="taxonomic scope" value="Bacteria"/>
</dbReference>
<dbReference type="HOGENOM" id="CLU_000688_16_2_14"/>
<dbReference type="OrthoDB" id="9809379at2"/>
<dbReference type="Proteomes" id="UP000000549">
    <property type="component" value="Chromosome"/>
</dbReference>
<dbReference type="GO" id="GO:0005886">
    <property type="term" value="C:plasma membrane"/>
    <property type="evidence" value="ECO:0007669"/>
    <property type="project" value="UniProtKB-SubCell"/>
</dbReference>
<dbReference type="GO" id="GO:0005524">
    <property type="term" value="F:ATP binding"/>
    <property type="evidence" value="ECO:0007669"/>
    <property type="project" value="UniProtKB-UniRule"/>
</dbReference>
<dbReference type="GO" id="GO:0016887">
    <property type="term" value="F:ATP hydrolysis activity"/>
    <property type="evidence" value="ECO:0007669"/>
    <property type="project" value="UniProtKB-UniRule"/>
</dbReference>
<dbReference type="GO" id="GO:0004176">
    <property type="term" value="F:ATP-dependent peptidase activity"/>
    <property type="evidence" value="ECO:0007669"/>
    <property type="project" value="InterPro"/>
</dbReference>
<dbReference type="GO" id="GO:0004222">
    <property type="term" value="F:metalloendopeptidase activity"/>
    <property type="evidence" value="ECO:0007669"/>
    <property type="project" value="InterPro"/>
</dbReference>
<dbReference type="GO" id="GO:0008270">
    <property type="term" value="F:zinc ion binding"/>
    <property type="evidence" value="ECO:0007669"/>
    <property type="project" value="UniProtKB-UniRule"/>
</dbReference>
<dbReference type="GO" id="GO:0030163">
    <property type="term" value="P:protein catabolic process"/>
    <property type="evidence" value="ECO:0007669"/>
    <property type="project" value="UniProtKB-UniRule"/>
</dbReference>
<dbReference type="GO" id="GO:0006508">
    <property type="term" value="P:proteolysis"/>
    <property type="evidence" value="ECO:0007669"/>
    <property type="project" value="UniProtKB-KW"/>
</dbReference>
<dbReference type="CDD" id="cd19501">
    <property type="entry name" value="RecA-like_FtsH"/>
    <property type="match status" value="1"/>
</dbReference>
<dbReference type="FunFam" id="1.10.8.60:FF:000001">
    <property type="entry name" value="ATP-dependent zinc metalloprotease FtsH"/>
    <property type="match status" value="1"/>
</dbReference>
<dbReference type="FunFam" id="1.20.58.760:FF:000001">
    <property type="entry name" value="ATP-dependent zinc metalloprotease FtsH"/>
    <property type="match status" value="1"/>
</dbReference>
<dbReference type="FunFam" id="3.40.50.300:FF:000001">
    <property type="entry name" value="ATP-dependent zinc metalloprotease FtsH"/>
    <property type="match status" value="1"/>
</dbReference>
<dbReference type="Gene3D" id="1.10.8.60">
    <property type="match status" value="1"/>
</dbReference>
<dbReference type="Gene3D" id="3.40.50.300">
    <property type="entry name" value="P-loop containing nucleotide triphosphate hydrolases"/>
    <property type="match status" value="1"/>
</dbReference>
<dbReference type="Gene3D" id="1.20.58.760">
    <property type="entry name" value="Peptidase M41"/>
    <property type="match status" value="1"/>
</dbReference>
<dbReference type="HAMAP" id="MF_01458">
    <property type="entry name" value="FtsH"/>
    <property type="match status" value="1"/>
</dbReference>
<dbReference type="InterPro" id="IPR003593">
    <property type="entry name" value="AAA+_ATPase"/>
</dbReference>
<dbReference type="InterPro" id="IPR041569">
    <property type="entry name" value="AAA_lid_3"/>
</dbReference>
<dbReference type="InterPro" id="IPR003959">
    <property type="entry name" value="ATPase_AAA_core"/>
</dbReference>
<dbReference type="InterPro" id="IPR005936">
    <property type="entry name" value="FtsH"/>
</dbReference>
<dbReference type="InterPro" id="IPR027417">
    <property type="entry name" value="P-loop_NTPase"/>
</dbReference>
<dbReference type="InterPro" id="IPR000642">
    <property type="entry name" value="Peptidase_M41"/>
</dbReference>
<dbReference type="InterPro" id="IPR037219">
    <property type="entry name" value="Peptidase_M41-like"/>
</dbReference>
<dbReference type="NCBIfam" id="TIGR01241">
    <property type="entry name" value="FtsH_fam"/>
    <property type="match status" value="1"/>
</dbReference>
<dbReference type="PANTHER" id="PTHR23076:SF97">
    <property type="entry name" value="ATP-DEPENDENT ZINC METALLOPROTEASE YME1L1"/>
    <property type="match status" value="1"/>
</dbReference>
<dbReference type="PANTHER" id="PTHR23076">
    <property type="entry name" value="METALLOPROTEASE M41 FTSH"/>
    <property type="match status" value="1"/>
</dbReference>
<dbReference type="Pfam" id="PF00004">
    <property type="entry name" value="AAA"/>
    <property type="match status" value="1"/>
</dbReference>
<dbReference type="Pfam" id="PF17862">
    <property type="entry name" value="AAA_lid_3"/>
    <property type="match status" value="1"/>
</dbReference>
<dbReference type="Pfam" id="PF01434">
    <property type="entry name" value="Peptidase_M41"/>
    <property type="match status" value="1"/>
</dbReference>
<dbReference type="SMART" id="SM00382">
    <property type="entry name" value="AAA"/>
    <property type="match status" value="1"/>
</dbReference>
<dbReference type="SUPFAM" id="SSF140990">
    <property type="entry name" value="FtsH protease domain-like"/>
    <property type="match status" value="1"/>
</dbReference>
<dbReference type="SUPFAM" id="SSF52540">
    <property type="entry name" value="P-loop containing nucleoside triphosphate hydrolases"/>
    <property type="match status" value="1"/>
</dbReference>
<protein>
    <recommendedName>
        <fullName evidence="1">ATP-dependent zinc metalloprotease FtsH</fullName>
        <ecNumber evidence="1">3.4.24.-</ecNumber>
    </recommendedName>
</protein>
<reference key="1">
    <citation type="journal article" date="2005" name="J. Bacteriol.">
        <title>Swine and poultry pathogens: the complete genome sequences of two strains of Mycoplasma hyopneumoniae and a strain of Mycoplasma synoviae.</title>
        <authorList>
            <person name="Vasconcelos A.T.R."/>
            <person name="Ferreira H.B."/>
            <person name="Bizarro C.V."/>
            <person name="Bonatto S.L."/>
            <person name="Carvalho M.O."/>
            <person name="Pinto P.M."/>
            <person name="Almeida D.F."/>
            <person name="Almeida L.G.P."/>
            <person name="Almeida R."/>
            <person name="Alves-Junior L."/>
            <person name="Assuncao E.N."/>
            <person name="Azevedo V.A.C."/>
            <person name="Bogo M.R."/>
            <person name="Brigido M.M."/>
            <person name="Brocchi M."/>
            <person name="Burity H.A."/>
            <person name="Camargo A.A."/>
            <person name="Camargo S.S."/>
            <person name="Carepo M.S."/>
            <person name="Carraro D.M."/>
            <person name="de Mattos Cascardo J.C."/>
            <person name="Castro L.A."/>
            <person name="Cavalcanti G."/>
            <person name="Chemale G."/>
            <person name="Collevatti R.G."/>
            <person name="Cunha C.W."/>
            <person name="Dallagiovanna B."/>
            <person name="Dambros B.P."/>
            <person name="Dellagostin O.A."/>
            <person name="Falcao C."/>
            <person name="Fantinatti-Garboggini F."/>
            <person name="Felipe M.S.S."/>
            <person name="Fiorentin L."/>
            <person name="Franco G.R."/>
            <person name="Freitas N.S.A."/>
            <person name="Frias D."/>
            <person name="Grangeiro T.B."/>
            <person name="Grisard E.C."/>
            <person name="Guimaraes C.T."/>
            <person name="Hungria M."/>
            <person name="Jardim S.N."/>
            <person name="Krieger M.A."/>
            <person name="Laurino J.P."/>
            <person name="Lima L.F.A."/>
            <person name="Lopes M.I."/>
            <person name="Loreto E.L.S."/>
            <person name="Madeira H.M.F."/>
            <person name="Manfio G.P."/>
            <person name="Maranhao A.Q."/>
            <person name="Martinkovics C.T."/>
            <person name="Medeiros S.R.B."/>
            <person name="Moreira M.A.M."/>
            <person name="Neiva M."/>
            <person name="Ramalho-Neto C.E."/>
            <person name="Nicolas M.F."/>
            <person name="Oliveira S.C."/>
            <person name="Paixao R.F.C."/>
            <person name="Pedrosa F.O."/>
            <person name="Pena S.D.J."/>
            <person name="Pereira M."/>
            <person name="Pereira-Ferrari L."/>
            <person name="Piffer I."/>
            <person name="Pinto L.S."/>
            <person name="Potrich D.P."/>
            <person name="Salim A.C.M."/>
            <person name="Santos F.R."/>
            <person name="Schmitt R."/>
            <person name="Schneider M.P.C."/>
            <person name="Schrank A."/>
            <person name="Schrank I.S."/>
            <person name="Schuck A.F."/>
            <person name="Seuanez H.N."/>
            <person name="Silva D.W."/>
            <person name="Silva R."/>
            <person name="Silva S.C."/>
            <person name="Soares C.M.A."/>
            <person name="Souza K.R.L."/>
            <person name="Souza R.C."/>
            <person name="Staats C.C."/>
            <person name="Steffens M.B.R."/>
            <person name="Teixeira S.M.R."/>
            <person name="Urmenyi T.P."/>
            <person name="Vainstein M.H."/>
            <person name="Zuccherato L.W."/>
            <person name="Simpson A.J.G."/>
            <person name="Zaha A."/>
        </authorList>
    </citation>
    <scope>NUCLEOTIDE SEQUENCE [LARGE SCALE GENOMIC DNA]</scope>
    <source>
        <strain>53</strain>
    </source>
</reference>
<organism>
    <name type="scientific">Mycoplasmopsis synoviae (strain 53)</name>
    <name type="common">Mycoplasma synoviae</name>
    <dbReference type="NCBI Taxonomy" id="262723"/>
    <lineage>
        <taxon>Bacteria</taxon>
        <taxon>Bacillati</taxon>
        <taxon>Mycoplasmatota</taxon>
        <taxon>Mycoplasmoidales</taxon>
        <taxon>Metamycoplasmataceae</taxon>
        <taxon>Mycoplasmopsis</taxon>
    </lineage>
</organism>
<keyword id="KW-0067">ATP-binding</keyword>
<keyword id="KW-1003">Cell membrane</keyword>
<keyword id="KW-0378">Hydrolase</keyword>
<keyword id="KW-0472">Membrane</keyword>
<keyword id="KW-0479">Metal-binding</keyword>
<keyword id="KW-0482">Metalloprotease</keyword>
<keyword id="KW-0547">Nucleotide-binding</keyword>
<keyword id="KW-0645">Protease</keyword>
<keyword id="KW-1185">Reference proteome</keyword>
<keyword id="KW-0812">Transmembrane</keyword>
<keyword id="KW-1133">Transmembrane helix</keyword>
<keyword id="KW-0862">Zinc</keyword>
<accession>Q4A5F0</accession>
<sequence>MKQNIKRNWIWILIVMIVIGIILYFSIRNLFSTKVAEWSISELLNNIERAKENTTDALYFKEITVNPFTNSITGVFNNTDNTSTSFVTYTNLDLLRLSGVASDQGVISKIFTPEVFLTANNVSGSLKSVATPQPNPFLGILISSVPVLILIFVMVWIYRSQVKMMNGQGGAFGGDKGTAQIIKSDKKFTDIAGNKEPIEEISEVVDYLKNPGKYQQSGARMPHGILLGGPPGTGKTLLAKATAGEANVPFYFVSASSFVELFVGMGAKRVRQVISEARKNSPAIIFIDELDAIGRTRGSGIGGGHDEREQTLNQLLVEMDGMKENSGLLFIAATNRTDVLDPALIRPGRFDRIITVGLPDVKEREEILKLHAKGKRFESNVDFANIAKRTPGFSGAQLENVINEAVLLSIREDTKVINLYQIDEAIDRVMSGPAKKSRTITKEELTMVAYHEAGHAVVGIKVPGGNKVQKITIIPRGNAGGYNLMMPENEKYNYSKADLYATIASFMGGRAAEEIIYGDNKISTGAADDIKKATSIARRMVTQFGMSDLGPIEYQSDEGSPFLGKALASNSSLSNQVNHEIELEIRKIIFTAKEQATKIIKQNIELLELIKESLLKKETIVGEEIEYIAKHMKLPPEKIEEKDLSKNSEDNNLDSLIEKTSKKE</sequence>